<dbReference type="EMBL" id="Z68203">
    <property type="protein sequence ID" value="CAA92418.1"/>
    <property type="molecule type" value="Genomic_DNA"/>
</dbReference>
<dbReference type="EMBL" id="U00090">
    <property type="protein sequence ID" value="AAB91891.1"/>
    <property type="molecule type" value="Genomic_DNA"/>
</dbReference>
<dbReference type="RefSeq" id="NP_444104.1">
    <property type="nucleotide sequence ID" value="NC_000914.2"/>
</dbReference>
<dbReference type="RefSeq" id="WP_010875159.1">
    <property type="nucleotide sequence ID" value="NC_000914.2"/>
</dbReference>
<dbReference type="SMR" id="Q53211"/>
<dbReference type="KEGG" id="rhi:NGR_a01210"/>
<dbReference type="PATRIC" id="fig|394.7.peg.105"/>
<dbReference type="eggNOG" id="COG0316">
    <property type="taxonomic scope" value="Bacteria"/>
</dbReference>
<dbReference type="HOGENOM" id="CLU_069054_5_2_5"/>
<dbReference type="OrthoDB" id="9801228at2"/>
<dbReference type="Proteomes" id="UP000001054">
    <property type="component" value="Plasmid pNGR234a"/>
</dbReference>
<dbReference type="GO" id="GO:0051537">
    <property type="term" value="F:2 iron, 2 sulfur cluster binding"/>
    <property type="evidence" value="ECO:0007669"/>
    <property type="project" value="TreeGrafter"/>
</dbReference>
<dbReference type="GO" id="GO:0051539">
    <property type="term" value="F:4 iron, 4 sulfur cluster binding"/>
    <property type="evidence" value="ECO:0007669"/>
    <property type="project" value="TreeGrafter"/>
</dbReference>
<dbReference type="GO" id="GO:0005506">
    <property type="term" value="F:iron ion binding"/>
    <property type="evidence" value="ECO:0007669"/>
    <property type="project" value="TreeGrafter"/>
</dbReference>
<dbReference type="GO" id="GO:0016226">
    <property type="term" value="P:iron-sulfur cluster assembly"/>
    <property type="evidence" value="ECO:0007669"/>
    <property type="project" value="InterPro"/>
</dbReference>
<dbReference type="Gene3D" id="2.60.300.12">
    <property type="entry name" value="HesB-like domain"/>
    <property type="match status" value="1"/>
</dbReference>
<dbReference type="InterPro" id="IPR000361">
    <property type="entry name" value="FeS_biogenesis"/>
</dbReference>
<dbReference type="InterPro" id="IPR016092">
    <property type="entry name" value="FeS_cluster_insertion"/>
</dbReference>
<dbReference type="InterPro" id="IPR017870">
    <property type="entry name" value="FeS_cluster_insertion_CS"/>
</dbReference>
<dbReference type="InterPro" id="IPR035903">
    <property type="entry name" value="HesB-like_dom_sf"/>
</dbReference>
<dbReference type="NCBIfam" id="TIGR00049">
    <property type="entry name" value="iron-sulfur cluster assembly accessory protein"/>
    <property type="match status" value="1"/>
</dbReference>
<dbReference type="PANTHER" id="PTHR43011">
    <property type="entry name" value="IRON-SULFUR CLUSTER ASSEMBLY 2 HOMOLOG, MITOCHONDRIAL"/>
    <property type="match status" value="1"/>
</dbReference>
<dbReference type="PANTHER" id="PTHR43011:SF1">
    <property type="entry name" value="IRON-SULFUR CLUSTER ASSEMBLY 2 HOMOLOG, MITOCHONDRIAL"/>
    <property type="match status" value="1"/>
</dbReference>
<dbReference type="Pfam" id="PF01521">
    <property type="entry name" value="Fe-S_biosyn"/>
    <property type="match status" value="1"/>
</dbReference>
<dbReference type="SUPFAM" id="SSF89360">
    <property type="entry name" value="HesB-like domain"/>
    <property type="match status" value="1"/>
</dbReference>
<dbReference type="PROSITE" id="PS01152">
    <property type="entry name" value="HESB"/>
    <property type="match status" value="1"/>
</dbReference>
<gene>
    <name type="ordered locus">NGR_a01210</name>
    <name type="ORF">y4vC</name>
</gene>
<evidence type="ECO:0000305" key="1"/>
<accession>Q53211</accession>
<protein>
    <recommendedName>
        <fullName>Uncharacterized protein y4vC</fullName>
    </recommendedName>
</protein>
<name>Y4VC_SINFN</name>
<geneLocation type="plasmid">
    <name>sym pNGR234a</name>
</geneLocation>
<sequence>MITLTDSAIAAIKFALSQTCEPADGLRIKVEAGGCSGFKYHLGLDSESRDGDAVIEAGGVKVYVDSASQPHVSGMTVDFTTGVDSAGFIFDNPNARENCACGKSFG</sequence>
<keyword id="KW-0614">Plasmid</keyword>
<keyword id="KW-1185">Reference proteome</keyword>
<feature type="chain" id="PRO_0000077030" description="Uncharacterized protein y4vC">
    <location>
        <begin position="1"/>
        <end position="106"/>
    </location>
</feature>
<proteinExistence type="inferred from homology"/>
<comment type="similarity">
    <text evidence="1">Belongs to the HesB/IscA family.</text>
</comment>
<organism>
    <name type="scientific">Sinorhizobium fredii (strain NBRC 101917 / NGR234)</name>
    <dbReference type="NCBI Taxonomy" id="394"/>
    <lineage>
        <taxon>Bacteria</taxon>
        <taxon>Pseudomonadati</taxon>
        <taxon>Pseudomonadota</taxon>
        <taxon>Alphaproteobacteria</taxon>
        <taxon>Hyphomicrobiales</taxon>
        <taxon>Rhizobiaceae</taxon>
        <taxon>Sinorhizobium/Ensifer group</taxon>
        <taxon>Sinorhizobium</taxon>
    </lineage>
</organism>
<reference key="1">
    <citation type="journal article" date="1996" name="Genome Res.">
        <title>Sequencing the 500-kb GC-rich symbiotic replicon of Rhizobium sp. NGR234 using dye terminators and a thermostable 'sequenase': a beginning.</title>
        <authorList>
            <person name="Freiberg C."/>
            <person name="Perret X."/>
            <person name="Broughton W.J."/>
            <person name="Rosenthal A."/>
        </authorList>
    </citation>
    <scope>NUCLEOTIDE SEQUENCE [GENOMIC DNA]</scope>
</reference>
<reference key="2">
    <citation type="journal article" date="1997" name="Nature">
        <title>Molecular basis of symbiosis between Rhizobium and legumes.</title>
        <authorList>
            <person name="Freiberg C.A."/>
            <person name="Fellay R."/>
            <person name="Bairoch A."/>
            <person name="Broughton W.J."/>
            <person name="Rosenthal A."/>
            <person name="Perret X."/>
        </authorList>
    </citation>
    <scope>NUCLEOTIDE SEQUENCE [LARGE SCALE GENOMIC DNA]</scope>
    <source>
        <strain>NBRC 101917 / NGR234</strain>
    </source>
</reference>
<reference key="3">
    <citation type="journal article" date="2009" name="Appl. Environ. Microbiol.">
        <title>Rhizobium sp. strain NGR234 possesses a remarkable number of secretion systems.</title>
        <authorList>
            <person name="Schmeisser C."/>
            <person name="Liesegang H."/>
            <person name="Krysciak D."/>
            <person name="Bakkou N."/>
            <person name="Le Quere A."/>
            <person name="Wollherr A."/>
            <person name="Heinemeyer I."/>
            <person name="Morgenstern B."/>
            <person name="Pommerening-Roeser A."/>
            <person name="Flores M."/>
            <person name="Palacios R."/>
            <person name="Brenner S."/>
            <person name="Gottschalk G."/>
            <person name="Schmitz R.A."/>
            <person name="Broughton W.J."/>
            <person name="Perret X."/>
            <person name="Strittmatter A.W."/>
            <person name="Streit W.R."/>
        </authorList>
    </citation>
    <scope>NUCLEOTIDE SEQUENCE [LARGE SCALE GENOMIC DNA]</scope>
    <source>
        <strain>NBRC 101917 / NGR234</strain>
    </source>
</reference>